<feature type="chain" id="PRO_0000166076" description="Sulfite oxidase">
    <location>
        <begin position="1"/>
        <end position="459"/>
    </location>
</feature>
<feature type="domain" description="Cytochrome b5 heme-binding" evidence="2">
    <location>
        <begin position="4"/>
        <end position="83"/>
    </location>
</feature>
<feature type="region of interest" description="Disordered" evidence="3">
    <location>
        <begin position="83"/>
        <end position="115"/>
    </location>
</feature>
<feature type="region of interest" description="Hinge" evidence="8">
    <location>
        <begin position="86"/>
        <end position="95"/>
    </location>
</feature>
<feature type="region of interest" description="Moco domain" evidence="8">
    <location>
        <begin position="96"/>
        <end position="323"/>
    </location>
</feature>
<feature type="region of interest" description="Homodimerization" evidence="5">
    <location>
        <begin position="324"/>
        <end position="459"/>
    </location>
</feature>
<feature type="compositionally biased region" description="Low complexity" evidence="3">
    <location>
        <begin position="85"/>
        <end position="100"/>
    </location>
</feature>
<feature type="binding site" description="axial binding residue" evidence="5">
    <location>
        <position position="40"/>
    </location>
    <ligand>
        <name>heme b</name>
        <dbReference type="ChEBI" id="CHEBI:60344"/>
    </ligand>
    <ligandPart>
        <name>Fe</name>
        <dbReference type="ChEBI" id="CHEBI:18248"/>
    </ligandPart>
</feature>
<feature type="binding site" description="axial binding residue" evidence="5">
    <location>
        <position position="65"/>
    </location>
    <ligand>
        <name>heme b</name>
        <dbReference type="ChEBI" id="CHEBI:60344"/>
    </ligand>
    <ligandPart>
        <name>Fe</name>
        <dbReference type="ChEBI" id="CHEBI:18248"/>
    </ligandPart>
</feature>
<feature type="binding site" evidence="5">
    <location>
        <position position="69"/>
    </location>
    <ligand>
        <name>heme b</name>
        <dbReference type="ChEBI" id="CHEBI:60344"/>
    </ligand>
</feature>
<feature type="binding site" evidence="5">
    <location>
        <begin position="136"/>
        <end position="140"/>
    </location>
    <ligand>
        <name>Mo-molybdopterin</name>
        <dbReference type="ChEBI" id="CHEBI:71302"/>
    </ligand>
</feature>
<feature type="binding site" evidence="5">
    <location>
        <position position="185"/>
    </location>
    <ligand>
        <name>Mo-molybdopterin</name>
        <dbReference type="ChEBI" id="CHEBI:71302"/>
    </ligand>
    <ligandPart>
        <name>Mo</name>
        <dbReference type="ChEBI" id="CHEBI:28685"/>
    </ligandPart>
</feature>
<feature type="binding site" evidence="5">
    <location>
        <position position="244"/>
    </location>
    <ligand>
        <name>Mo-molybdopterin</name>
        <dbReference type="ChEBI" id="CHEBI:71302"/>
    </ligand>
</feature>
<feature type="binding site" evidence="5">
    <location>
        <position position="283"/>
    </location>
    <ligand>
        <name>Mo-molybdopterin</name>
        <dbReference type="ChEBI" id="CHEBI:71302"/>
    </ligand>
</feature>
<feature type="binding site" evidence="5">
    <location>
        <position position="288"/>
    </location>
    <ligand>
        <name>Mo-molybdopterin</name>
        <dbReference type="ChEBI" id="CHEBI:71302"/>
    </ligand>
</feature>
<feature type="binding site" evidence="5">
    <location>
        <begin position="299"/>
        <end position="301"/>
    </location>
    <ligand>
        <name>Mo-molybdopterin</name>
        <dbReference type="ChEBI" id="CHEBI:71302"/>
    </ligand>
</feature>
<feature type="sequence conflict" description="In Ref. 1; AA sequence." evidence="6" ref="1">
    <original>R</original>
    <variation>RR</variation>
    <location>
        <position position="152"/>
    </location>
</feature>
<feature type="helix" evidence="9">
    <location>
        <begin position="9"/>
        <end position="12"/>
    </location>
</feature>
<feature type="turn" evidence="9">
    <location>
        <begin position="18"/>
        <end position="20"/>
    </location>
</feature>
<feature type="strand" evidence="9">
    <location>
        <begin position="21"/>
        <end position="26"/>
    </location>
</feature>
<feature type="strand" evidence="9">
    <location>
        <begin position="29"/>
        <end position="32"/>
    </location>
</feature>
<feature type="turn" evidence="9">
    <location>
        <begin position="34"/>
        <end position="39"/>
    </location>
</feature>
<feature type="helix" evidence="9">
    <location>
        <begin position="44"/>
        <end position="47"/>
    </location>
</feature>
<feature type="helix" evidence="9">
    <location>
        <begin position="48"/>
        <end position="50"/>
    </location>
</feature>
<feature type="strand" evidence="9">
    <location>
        <begin position="53"/>
        <end position="55"/>
    </location>
</feature>
<feature type="helix" evidence="9">
    <location>
        <begin position="56"/>
        <end position="61"/>
    </location>
</feature>
<feature type="helix" evidence="9">
    <location>
        <begin position="63"/>
        <end position="66"/>
    </location>
</feature>
<feature type="helix" evidence="9">
    <location>
        <begin position="68"/>
        <end position="75"/>
    </location>
</feature>
<feature type="strand" evidence="9">
    <location>
        <begin position="78"/>
        <end position="82"/>
    </location>
</feature>
<feature type="strand" evidence="9">
    <location>
        <begin position="92"/>
        <end position="94"/>
    </location>
</feature>
<feature type="turn" evidence="10">
    <location>
        <begin position="96"/>
        <end position="99"/>
    </location>
</feature>
<feature type="strand" evidence="10">
    <location>
        <begin position="107"/>
        <end position="111"/>
    </location>
</feature>
<feature type="turn" evidence="10">
    <location>
        <begin position="112"/>
        <end position="115"/>
    </location>
</feature>
<feature type="strand" evidence="10">
    <location>
        <begin position="116"/>
        <end position="118"/>
    </location>
</feature>
<feature type="helix" evidence="10">
    <location>
        <begin position="121"/>
        <end position="124"/>
    </location>
</feature>
<feature type="strand" evidence="10">
    <location>
        <begin position="126"/>
        <end position="129"/>
    </location>
</feature>
<feature type="turn" evidence="10">
    <location>
        <begin position="132"/>
        <end position="134"/>
    </location>
</feature>
<feature type="turn" evidence="10">
    <location>
        <begin position="148"/>
        <end position="150"/>
    </location>
</feature>
<feature type="strand" evidence="10">
    <location>
        <begin position="152"/>
        <end position="156"/>
    </location>
</feature>
<feature type="turn" evidence="11">
    <location>
        <begin position="158"/>
        <end position="160"/>
    </location>
</feature>
<feature type="strand" evidence="10">
    <location>
        <begin position="163"/>
        <end position="166"/>
    </location>
</feature>
<feature type="helix" evidence="10">
    <location>
        <begin position="167"/>
        <end position="173"/>
    </location>
</feature>
<feature type="strand" evidence="10">
    <location>
        <begin position="177"/>
        <end position="184"/>
    </location>
</feature>
<feature type="turn" evidence="10">
    <location>
        <begin position="186"/>
        <end position="189"/>
    </location>
</feature>
<feature type="helix" evidence="10">
    <location>
        <begin position="190"/>
        <end position="194"/>
    </location>
</feature>
<feature type="strand" evidence="10">
    <location>
        <begin position="208"/>
        <end position="218"/>
    </location>
</feature>
<feature type="helix" evidence="10">
    <location>
        <begin position="219"/>
        <end position="225"/>
    </location>
</feature>
<feature type="strand" evidence="10">
    <location>
        <begin position="237"/>
        <end position="245"/>
    </location>
</feature>
<feature type="strand" evidence="10">
    <location>
        <begin position="251"/>
        <end position="257"/>
    </location>
</feature>
<feature type="helix" evidence="10">
    <location>
        <begin position="258"/>
        <end position="262"/>
    </location>
</feature>
<feature type="helix" evidence="10">
    <location>
        <begin position="264"/>
        <end position="266"/>
    </location>
</feature>
<feature type="strand" evidence="10">
    <location>
        <begin position="269"/>
        <end position="274"/>
    </location>
</feature>
<feature type="helix" evidence="10">
    <location>
        <begin position="281"/>
        <end position="283"/>
    </location>
</feature>
<feature type="turn" evidence="10">
    <location>
        <begin position="284"/>
        <end position="286"/>
    </location>
</feature>
<feature type="strand" evidence="10">
    <location>
        <begin position="288"/>
        <end position="290"/>
    </location>
</feature>
<feature type="helix" evidence="10">
    <location>
        <begin position="296"/>
        <end position="298"/>
    </location>
</feature>
<feature type="strand" evidence="10">
    <location>
        <begin position="301"/>
        <end position="311"/>
    </location>
</feature>
<feature type="helix" evidence="10">
    <location>
        <begin position="316"/>
        <end position="319"/>
    </location>
</feature>
<feature type="strand" evidence="10">
    <location>
        <begin position="320"/>
        <end position="322"/>
    </location>
</feature>
<feature type="turn" evidence="10">
    <location>
        <begin position="331"/>
        <end position="333"/>
    </location>
</feature>
<feature type="helix" evidence="10">
    <location>
        <begin position="336"/>
        <end position="338"/>
    </location>
</feature>
<feature type="strand" evidence="10">
    <location>
        <begin position="348"/>
        <end position="354"/>
    </location>
</feature>
<feature type="strand" evidence="10">
    <location>
        <begin position="362"/>
        <end position="372"/>
    </location>
</feature>
<feature type="strand" evidence="10">
    <location>
        <begin position="379"/>
        <end position="391"/>
    </location>
</feature>
<feature type="strand" evidence="11">
    <location>
        <begin position="396"/>
        <end position="398"/>
    </location>
</feature>
<feature type="strand" evidence="10">
    <location>
        <begin position="411"/>
        <end position="419"/>
    </location>
</feature>
<feature type="strand" evidence="10">
    <location>
        <begin position="424"/>
        <end position="433"/>
    </location>
</feature>
<feature type="helix" evidence="10">
    <location>
        <begin position="444"/>
        <end position="446"/>
    </location>
</feature>
<keyword id="KW-0002">3D-structure</keyword>
<keyword id="KW-0903">Direct protein sequencing</keyword>
<keyword id="KW-0349">Heme</keyword>
<keyword id="KW-0408">Iron</keyword>
<keyword id="KW-0479">Metal-binding</keyword>
<keyword id="KW-0496">Mitochondrion</keyword>
<keyword id="KW-0500">Molybdenum</keyword>
<keyword id="KW-0560">Oxidoreductase</keyword>
<keyword id="KW-1185">Reference proteome</keyword>
<name>SUOX_CHICK</name>
<accession>P07850</accession>
<evidence type="ECO:0000250" key="1">
    <source>
        <dbReference type="UniProtKB" id="Q07116"/>
    </source>
</evidence>
<evidence type="ECO:0000255" key="2">
    <source>
        <dbReference type="PROSITE-ProRule" id="PRU00279"/>
    </source>
</evidence>
<evidence type="ECO:0000256" key="3">
    <source>
        <dbReference type="SAM" id="MobiDB-lite"/>
    </source>
</evidence>
<evidence type="ECO:0000269" key="4">
    <source>
    </source>
</evidence>
<evidence type="ECO:0000269" key="5">
    <source>
    </source>
</evidence>
<evidence type="ECO:0000305" key="6"/>
<evidence type="ECO:0000305" key="7">
    <source>
    </source>
</evidence>
<evidence type="ECO:0000305" key="8">
    <source>
    </source>
</evidence>
<evidence type="ECO:0007829" key="9">
    <source>
        <dbReference type="PDB" id="1SOX"/>
    </source>
</evidence>
<evidence type="ECO:0007829" key="10">
    <source>
        <dbReference type="PDB" id="2A9D"/>
    </source>
</evidence>
<evidence type="ECO:0007829" key="11">
    <source>
        <dbReference type="PDB" id="3HBG"/>
    </source>
</evidence>
<proteinExistence type="evidence at protein level"/>
<protein>
    <recommendedName>
        <fullName>Sulfite oxidase</fullName>
        <ecNumber evidence="7">1.8.3.1</ecNumber>
    </recommendedName>
</protein>
<comment type="function">
    <text evidence="4">Catalyzes the oxidation of sulfite to sulfate, the terminal reaction in the oxidative degradation of sulfur-containing amino acids.</text>
</comment>
<comment type="catalytic activity">
    <reaction evidence="7">
        <text>sulfite + O2 + H2O = sulfate + H2O2</text>
        <dbReference type="Rhea" id="RHEA:24600"/>
        <dbReference type="ChEBI" id="CHEBI:15377"/>
        <dbReference type="ChEBI" id="CHEBI:15379"/>
        <dbReference type="ChEBI" id="CHEBI:16189"/>
        <dbReference type="ChEBI" id="CHEBI:16240"/>
        <dbReference type="ChEBI" id="CHEBI:17359"/>
        <dbReference type="EC" id="1.8.3.1"/>
    </reaction>
    <physiologicalReaction direction="left-to-right" evidence="7">
        <dbReference type="Rhea" id="RHEA:24601"/>
    </physiologicalReaction>
</comment>
<comment type="cofactor">
    <cofactor evidence="5">
        <name>heme b</name>
        <dbReference type="ChEBI" id="CHEBI:60344"/>
    </cofactor>
    <text evidence="5">Binds 1 heme b (iron(II)-protoporphyrin IX) group non-covalently per subunit.</text>
</comment>
<comment type="cofactor">
    <cofactor evidence="5">
        <name>Mo-molybdopterin</name>
        <dbReference type="ChEBI" id="CHEBI:71302"/>
    </cofactor>
    <text evidence="5">Binds 1 Mo-molybdopterin (Mo-MPT) cofactor per subunit.</text>
</comment>
<comment type="pathway">
    <text evidence="7">Energy metabolism; sulfur metabolism.</text>
</comment>
<comment type="subunit">
    <text evidence="5">Homodimer.</text>
</comment>
<comment type="subcellular location">
    <subcellularLocation>
        <location evidence="1">Mitochondrion intermembrane space</location>
    </subcellularLocation>
</comment>
<dbReference type="EC" id="1.8.3.1" evidence="7"/>
<dbReference type="EMBL" id="X52559">
    <property type="protein sequence ID" value="CAA36793.1"/>
    <property type="molecule type" value="mRNA"/>
</dbReference>
<dbReference type="PIR" id="A34180">
    <property type="entry name" value="A34180"/>
</dbReference>
<dbReference type="PDB" id="1SOX">
    <property type="method" value="X-ray"/>
    <property type="resolution" value="1.90 A"/>
    <property type="chains" value="A/B=1-459"/>
</dbReference>
<dbReference type="PDB" id="2A99">
    <property type="method" value="X-ray"/>
    <property type="resolution" value="2.20 A"/>
    <property type="chains" value="A=95-459"/>
</dbReference>
<dbReference type="PDB" id="2A9A">
    <property type="method" value="X-ray"/>
    <property type="resolution" value="2.00 A"/>
    <property type="chains" value="A/B=95-459"/>
</dbReference>
<dbReference type="PDB" id="2A9B">
    <property type="method" value="X-ray"/>
    <property type="resolution" value="2.50 A"/>
    <property type="chains" value="A=95-459"/>
</dbReference>
<dbReference type="PDB" id="2A9C">
    <property type="method" value="X-ray"/>
    <property type="resolution" value="2.50 A"/>
    <property type="chains" value="A/B=95-459"/>
</dbReference>
<dbReference type="PDB" id="2A9D">
    <property type="method" value="X-ray"/>
    <property type="resolution" value="1.70 A"/>
    <property type="chains" value="A/B=95-459"/>
</dbReference>
<dbReference type="PDB" id="3HBG">
    <property type="method" value="X-ray"/>
    <property type="resolution" value="1.90 A"/>
    <property type="chains" value="A=1-459"/>
</dbReference>
<dbReference type="PDB" id="3HBP">
    <property type="method" value="X-ray"/>
    <property type="resolution" value="2.40 A"/>
    <property type="chains" value="A=1-459"/>
</dbReference>
<dbReference type="PDB" id="3HBQ">
    <property type="method" value="X-ray"/>
    <property type="resolution" value="2.80 A"/>
    <property type="chains" value="A=1-459"/>
</dbReference>
<dbReference type="PDB" id="3R18">
    <property type="method" value="X-ray"/>
    <property type="resolution" value="2.40 A"/>
    <property type="chains" value="A=1-459"/>
</dbReference>
<dbReference type="PDB" id="3R19">
    <property type="method" value="X-ray"/>
    <property type="resolution" value="2.10 A"/>
    <property type="chains" value="A=1-459"/>
</dbReference>
<dbReference type="PDBsum" id="1SOX"/>
<dbReference type="PDBsum" id="2A99"/>
<dbReference type="PDBsum" id="2A9A"/>
<dbReference type="PDBsum" id="2A9B"/>
<dbReference type="PDBsum" id="2A9C"/>
<dbReference type="PDBsum" id="2A9D"/>
<dbReference type="PDBsum" id="3HBG"/>
<dbReference type="PDBsum" id="3HBP"/>
<dbReference type="PDBsum" id="3HBQ"/>
<dbReference type="PDBsum" id="3R18"/>
<dbReference type="PDBsum" id="3R19"/>
<dbReference type="SMR" id="P07850"/>
<dbReference type="FunCoup" id="P07850">
    <property type="interactions" value="1066"/>
</dbReference>
<dbReference type="STRING" id="9031.ENSGALP00000058284"/>
<dbReference type="VEuPathDB" id="HostDB:geneid_107055404"/>
<dbReference type="InParanoid" id="P07850"/>
<dbReference type="OrthoDB" id="10051395at2759"/>
<dbReference type="PhylomeDB" id="P07850"/>
<dbReference type="BRENDA" id="1.8.2.1">
    <property type="organism ID" value="1306"/>
</dbReference>
<dbReference type="BRENDA" id="1.8.3.1">
    <property type="organism ID" value="1306"/>
</dbReference>
<dbReference type="UniPathway" id="UPA00096"/>
<dbReference type="EvolutionaryTrace" id="P07850"/>
<dbReference type="Proteomes" id="UP000000539">
    <property type="component" value="Unassembled WGS sequence"/>
</dbReference>
<dbReference type="GO" id="GO:0005758">
    <property type="term" value="C:mitochondrial intermembrane space"/>
    <property type="evidence" value="ECO:0007669"/>
    <property type="project" value="UniProtKB-SubCell"/>
</dbReference>
<dbReference type="GO" id="GO:0005739">
    <property type="term" value="C:mitochondrion"/>
    <property type="evidence" value="ECO:0000318"/>
    <property type="project" value="GO_Central"/>
</dbReference>
<dbReference type="GO" id="GO:0020037">
    <property type="term" value="F:heme binding"/>
    <property type="evidence" value="ECO:0000318"/>
    <property type="project" value="GO_Central"/>
</dbReference>
<dbReference type="GO" id="GO:0030151">
    <property type="term" value="F:molybdenum ion binding"/>
    <property type="evidence" value="ECO:0007669"/>
    <property type="project" value="InterPro"/>
</dbReference>
<dbReference type="GO" id="GO:0043546">
    <property type="term" value="F:molybdopterin cofactor binding"/>
    <property type="evidence" value="ECO:0000318"/>
    <property type="project" value="GO_Central"/>
</dbReference>
<dbReference type="GO" id="GO:0008482">
    <property type="term" value="F:sulfite oxidase activity"/>
    <property type="evidence" value="ECO:0000318"/>
    <property type="project" value="GO_Central"/>
</dbReference>
<dbReference type="GO" id="GO:0006790">
    <property type="term" value="P:sulfur compound metabolic process"/>
    <property type="evidence" value="ECO:0000318"/>
    <property type="project" value="GO_Central"/>
</dbReference>
<dbReference type="CDD" id="cd02111">
    <property type="entry name" value="eukary_SO_Moco"/>
    <property type="match status" value="1"/>
</dbReference>
<dbReference type="FunFam" id="2.60.40.650:FF:000002">
    <property type="entry name" value="sulfite oxidase"/>
    <property type="match status" value="1"/>
</dbReference>
<dbReference type="FunFam" id="3.10.120.10:FF:000007">
    <property type="entry name" value="Sulfite oxidase, mitochondrial"/>
    <property type="match status" value="1"/>
</dbReference>
<dbReference type="FunFam" id="3.90.420.10:FF:000002">
    <property type="entry name" value="sulfite oxidase, mitochondrial"/>
    <property type="match status" value="1"/>
</dbReference>
<dbReference type="Gene3D" id="2.60.40.650">
    <property type="match status" value="1"/>
</dbReference>
<dbReference type="Gene3D" id="3.10.120.10">
    <property type="entry name" value="Cytochrome b5-like heme/steroid binding domain"/>
    <property type="match status" value="1"/>
</dbReference>
<dbReference type="Gene3D" id="3.90.420.10">
    <property type="entry name" value="Oxidoreductase, molybdopterin-binding domain"/>
    <property type="match status" value="1"/>
</dbReference>
<dbReference type="InterPro" id="IPR001199">
    <property type="entry name" value="Cyt_B5-like_heme/steroid-bd"/>
</dbReference>
<dbReference type="InterPro" id="IPR036400">
    <property type="entry name" value="Cyt_B5-like_heme/steroid_sf"/>
</dbReference>
<dbReference type="InterPro" id="IPR018506">
    <property type="entry name" value="Cyt_B5_heme-BS"/>
</dbReference>
<dbReference type="InterPro" id="IPR014756">
    <property type="entry name" value="Ig_E-set"/>
</dbReference>
<dbReference type="InterPro" id="IPR005066">
    <property type="entry name" value="MoCF_OxRdtse_dimer"/>
</dbReference>
<dbReference type="InterPro" id="IPR008335">
    <property type="entry name" value="Mopterin_OxRdtase_euk"/>
</dbReference>
<dbReference type="InterPro" id="IPR000572">
    <property type="entry name" value="OxRdtase_Mopterin-bd_dom"/>
</dbReference>
<dbReference type="InterPro" id="IPR036374">
    <property type="entry name" value="OxRdtase_Mopterin-bd_sf"/>
</dbReference>
<dbReference type="InterPro" id="IPR022407">
    <property type="entry name" value="OxRdtase_Mopterin_BS"/>
</dbReference>
<dbReference type="PANTHER" id="PTHR19372:SF7">
    <property type="entry name" value="SULFITE OXIDASE, MITOCHONDRIAL"/>
    <property type="match status" value="1"/>
</dbReference>
<dbReference type="PANTHER" id="PTHR19372">
    <property type="entry name" value="SULFITE REDUCTASE"/>
    <property type="match status" value="1"/>
</dbReference>
<dbReference type="Pfam" id="PF00173">
    <property type="entry name" value="Cyt-b5"/>
    <property type="match status" value="1"/>
</dbReference>
<dbReference type="Pfam" id="PF03404">
    <property type="entry name" value="Mo-co_dimer"/>
    <property type="match status" value="1"/>
</dbReference>
<dbReference type="Pfam" id="PF00174">
    <property type="entry name" value="Oxidored_molyb"/>
    <property type="match status" value="1"/>
</dbReference>
<dbReference type="PRINTS" id="PR00363">
    <property type="entry name" value="CYTOCHROMEB5"/>
</dbReference>
<dbReference type="PRINTS" id="PR00407">
    <property type="entry name" value="EUMOPTERIN"/>
</dbReference>
<dbReference type="SMART" id="SM01117">
    <property type="entry name" value="Cyt-b5"/>
    <property type="match status" value="1"/>
</dbReference>
<dbReference type="SUPFAM" id="SSF55856">
    <property type="entry name" value="Cytochrome b5-like heme/steroid binding domain"/>
    <property type="match status" value="1"/>
</dbReference>
<dbReference type="SUPFAM" id="SSF81296">
    <property type="entry name" value="E set domains"/>
    <property type="match status" value="1"/>
</dbReference>
<dbReference type="SUPFAM" id="SSF56524">
    <property type="entry name" value="Oxidoreductase molybdopterin-binding domain"/>
    <property type="match status" value="1"/>
</dbReference>
<dbReference type="PROSITE" id="PS00191">
    <property type="entry name" value="CYTOCHROME_B5_1"/>
    <property type="match status" value="1"/>
</dbReference>
<dbReference type="PROSITE" id="PS50255">
    <property type="entry name" value="CYTOCHROME_B5_2"/>
    <property type="match status" value="1"/>
</dbReference>
<dbReference type="PROSITE" id="PS00559">
    <property type="entry name" value="MOLYBDOPTERIN_EUK"/>
    <property type="match status" value="1"/>
</dbReference>
<reference key="1">
    <citation type="journal article" date="1989" name="J. Biol. Chem.">
        <title>Conserved domains in molybdenum hydroxylases. The amino acid sequence of chicken hepatic sulfite oxidase.</title>
        <authorList>
            <person name="Neame P.J."/>
            <person name="Barber M.J."/>
        </authorList>
    </citation>
    <scope>PROTEIN SEQUENCE</scope>
    <scope>FUNCTION</scope>
    <scope>CATALYTIC ACTIVITY</scope>
    <source>
        <tissue>Liver</tissue>
    </source>
</reference>
<reference key="2">
    <citation type="journal article" date="1979" name="Eur. J. Biochem.">
        <title>Amino acid sequence of the 'b5-like' heme-binding domain from chicken sulfite oxidase.</title>
        <authorList>
            <person name="Guiard B."/>
            <person name="Lederer F."/>
        </authorList>
    </citation>
    <scope>PROTEIN SEQUENCE OF 1-97</scope>
    <source>
        <tissue>Liver</tissue>
    </source>
</reference>
<reference key="3">
    <citation type="submission" date="1990-03" db="EMBL/GenBank/DDBJ databases">
        <authorList>
            <person name="Binder C.M."/>
            <person name="Irminger J.C."/>
            <person name="Jaussi R."/>
        </authorList>
    </citation>
    <scope>NUCLEOTIDE SEQUENCE [MRNA] OF 16-96</scope>
    <source>
        <strain>White leghorn</strain>
        <tissue>Liver</tissue>
    </source>
</reference>
<reference key="4">
    <citation type="journal article" date="1997" name="Cell">
        <title>Molecular basis of sulfite oxidase deficiency from the structure of sulfite oxidase.</title>
        <authorList>
            <person name="Kisker C."/>
            <person name="Schindelin H."/>
            <person name="Pacheco A."/>
            <person name="Wehbi W.A."/>
            <person name="Garrett R.M."/>
            <person name="Rajagopalan K.V."/>
            <person name="Enemark J.H."/>
            <person name="Rees D.C."/>
        </authorList>
    </citation>
    <scope>SEQUENCE REVISION TO 152</scope>
    <scope>X-RAY CRYSTALLOGRAPHY (1.9 ANGSTROMS) IN COMPLEX WITH HEME AND MO-MOLYBDOPTERIN</scope>
    <scope>COFACTOR</scope>
    <source>
        <tissue>Liver</tissue>
    </source>
</reference>
<organism>
    <name type="scientific">Gallus gallus</name>
    <name type="common">Chicken</name>
    <dbReference type="NCBI Taxonomy" id="9031"/>
    <lineage>
        <taxon>Eukaryota</taxon>
        <taxon>Metazoa</taxon>
        <taxon>Chordata</taxon>
        <taxon>Craniata</taxon>
        <taxon>Vertebrata</taxon>
        <taxon>Euteleostomi</taxon>
        <taxon>Archelosauria</taxon>
        <taxon>Archosauria</taxon>
        <taxon>Dinosauria</taxon>
        <taxon>Saurischia</taxon>
        <taxon>Theropoda</taxon>
        <taxon>Coelurosauria</taxon>
        <taxon>Aves</taxon>
        <taxon>Neognathae</taxon>
        <taxon>Galloanserae</taxon>
        <taxon>Galliformes</taxon>
        <taxon>Phasianidae</taxon>
        <taxon>Phasianinae</taxon>
        <taxon>Gallus</taxon>
    </lineage>
</organism>
<sequence>APSYPRYTREEVGRHRSPEERVWVTHGTDVFDVTDFVELHPGGPDKILLAAGGALEPFWALYAVHGEPHVLELLQQYKVGELSPDEAPAAPDAQDPFAGDPPRHPGLRVNSQKPFNAEPPAELLAERFLTPNELFFTRNHLPVPAVEPSSYRLRVDGPGGRTLSLSLAELRSRFPKHEVTATLQCAGNRRSEMSRVRPVKGLPWDIGAISTARWGGASLRDVLLHAGFPEELQGGEHVCFEGLDADPGGAPYGASIPYGRALSPAADVLLAYEMNGTELPRDHRFPVRVVVPGVVGARSVKWLRRVAVSPDESPSRWQQNDYKGFSPCVDWDTVDYRTAPAIQELPVQSAVTQPRPGAAVPPGELTVKGYAWSGGGREVVRVDVSLDGGRTWKVARLMGDKAPPGRAWAWALWELTVPVEAGTELEIVCKAVDSSYNVQPDSVAPIWNLRGVLSTAWHR</sequence>
<gene>
    <name type="primary">SUOX</name>
</gene>